<sequence>MKLPIYLDYSATTPVDPRVAEKMMQFMTMDGTFGNPASRSHRFGWQAEEAVDIARNQIADLVGADPREIVFTSGATESDNLAIKGAANFYQKKGKHIITSKTEHKAVLDTCRQLEREGFEVTYLAPQRNGIIDLKELEAAMRDDTILVSIMHVNNEIGVVQDIAAIGEMCRARGIIYHVDATQSVGKLPIDLSQLKVDLMSFSGHKIYGPKGIGALYVRRKPRVRIEAQMHGGGHERGMRSGTLPVHQIVGMGEAYRIAKEEMATEMERLRGLRNRLWNGIKDIEEVYLNGDLEHGAPNILNVSFNYVEGESLIMALKDLAVSSGSACTSASLEPSYVLRALGLNDELAHSSIRFSLGRFTTEEEIDYTIELVRKSIGRLRDLSPLWEMYKQGVDLNSIEWAHH</sequence>
<reference key="1">
    <citation type="submission" date="2008-05" db="EMBL/GenBank/DDBJ databases">
        <title>Complete sequence of Shigella boydii serotype 18 strain BS512.</title>
        <authorList>
            <person name="Rasko D.A."/>
            <person name="Rosovitz M."/>
            <person name="Maurelli A.T."/>
            <person name="Myers G."/>
            <person name="Seshadri R."/>
            <person name="Cer R."/>
            <person name="Jiang L."/>
            <person name="Ravel J."/>
            <person name="Sebastian Y."/>
        </authorList>
    </citation>
    <scope>NUCLEOTIDE SEQUENCE [LARGE SCALE GENOMIC DNA]</scope>
    <source>
        <strain>CDC 3083-94 / BS512</strain>
    </source>
</reference>
<evidence type="ECO:0000255" key="1">
    <source>
        <dbReference type="HAMAP-Rule" id="MF_00331"/>
    </source>
</evidence>
<proteinExistence type="inferred from homology"/>
<dbReference type="EC" id="2.8.1.7" evidence="1"/>
<dbReference type="EMBL" id="CP001063">
    <property type="protein sequence ID" value="ACD09483.1"/>
    <property type="molecule type" value="Genomic_DNA"/>
</dbReference>
<dbReference type="RefSeq" id="WP_001295373.1">
    <property type="nucleotide sequence ID" value="NC_010658.1"/>
</dbReference>
<dbReference type="SMR" id="B2TXV5"/>
<dbReference type="STRING" id="344609.SbBS512_E2905"/>
<dbReference type="GeneID" id="93774606"/>
<dbReference type="KEGG" id="sbc:SbBS512_E2905"/>
<dbReference type="HOGENOM" id="CLU_003433_0_2_6"/>
<dbReference type="UniPathway" id="UPA00266"/>
<dbReference type="Proteomes" id="UP000001030">
    <property type="component" value="Chromosome"/>
</dbReference>
<dbReference type="GO" id="GO:1990221">
    <property type="term" value="C:L-cysteine desulfurase complex"/>
    <property type="evidence" value="ECO:0007669"/>
    <property type="project" value="UniProtKB-ARBA"/>
</dbReference>
<dbReference type="GO" id="GO:0051537">
    <property type="term" value="F:2 iron, 2 sulfur cluster binding"/>
    <property type="evidence" value="ECO:0007669"/>
    <property type="project" value="UniProtKB-UniRule"/>
</dbReference>
<dbReference type="GO" id="GO:0031071">
    <property type="term" value="F:cysteine desulfurase activity"/>
    <property type="evidence" value="ECO:0007669"/>
    <property type="project" value="UniProtKB-UniRule"/>
</dbReference>
<dbReference type="GO" id="GO:0046872">
    <property type="term" value="F:metal ion binding"/>
    <property type="evidence" value="ECO:0007669"/>
    <property type="project" value="UniProtKB-KW"/>
</dbReference>
<dbReference type="GO" id="GO:0030170">
    <property type="term" value="F:pyridoxal phosphate binding"/>
    <property type="evidence" value="ECO:0007669"/>
    <property type="project" value="UniProtKB-UniRule"/>
</dbReference>
<dbReference type="GO" id="GO:0044571">
    <property type="term" value="P:[2Fe-2S] cluster assembly"/>
    <property type="evidence" value="ECO:0007669"/>
    <property type="project" value="UniProtKB-UniRule"/>
</dbReference>
<dbReference type="FunFam" id="3.40.640.10:FF:000003">
    <property type="entry name" value="Cysteine desulfurase IscS"/>
    <property type="match status" value="1"/>
</dbReference>
<dbReference type="FunFam" id="3.90.1150.10:FF:000002">
    <property type="entry name" value="Cysteine desulfurase IscS"/>
    <property type="match status" value="1"/>
</dbReference>
<dbReference type="Gene3D" id="3.90.1150.10">
    <property type="entry name" value="Aspartate Aminotransferase, domain 1"/>
    <property type="match status" value="1"/>
</dbReference>
<dbReference type="Gene3D" id="3.40.640.10">
    <property type="entry name" value="Type I PLP-dependent aspartate aminotransferase-like (Major domain)"/>
    <property type="match status" value="1"/>
</dbReference>
<dbReference type="HAMAP" id="MF_00331">
    <property type="entry name" value="Cys_desulf_IscS"/>
    <property type="match status" value="1"/>
</dbReference>
<dbReference type="InterPro" id="IPR000192">
    <property type="entry name" value="Aminotrans_V_dom"/>
</dbReference>
<dbReference type="InterPro" id="IPR020578">
    <property type="entry name" value="Aminotrans_V_PyrdxlP_BS"/>
</dbReference>
<dbReference type="InterPro" id="IPR010240">
    <property type="entry name" value="Cys_deSase_IscS"/>
</dbReference>
<dbReference type="InterPro" id="IPR016454">
    <property type="entry name" value="Cysteine_dSase"/>
</dbReference>
<dbReference type="InterPro" id="IPR015424">
    <property type="entry name" value="PyrdxlP-dep_Trfase"/>
</dbReference>
<dbReference type="InterPro" id="IPR015421">
    <property type="entry name" value="PyrdxlP-dep_Trfase_major"/>
</dbReference>
<dbReference type="InterPro" id="IPR015422">
    <property type="entry name" value="PyrdxlP-dep_Trfase_small"/>
</dbReference>
<dbReference type="NCBIfam" id="TIGR02006">
    <property type="entry name" value="IscS"/>
    <property type="match status" value="1"/>
</dbReference>
<dbReference type="NCBIfam" id="NF002806">
    <property type="entry name" value="PRK02948.1"/>
    <property type="match status" value="1"/>
</dbReference>
<dbReference type="NCBIfam" id="NF010611">
    <property type="entry name" value="PRK14012.1"/>
    <property type="match status" value="1"/>
</dbReference>
<dbReference type="PANTHER" id="PTHR11601:SF34">
    <property type="entry name" value="CYSTEINE DESULFURASE"/>
    <property type="match status" value="1"/>
</dbReference>
<dbReference type="PANTHER" id="PTHR11601">
    <property type="entry name" value="CYSTEINE DESULFURYLASE FAMILY MEMBER"/>
    <property type="match status" value="1"/>
</dbReference>
<dbReference type="Pfam" id="PF00266">
    <property type="entry name" value="Aminotran_5"/>
    <property type="match status" value="1"/>
</dbReference>
<dbReference type="PIRSF" id="PIRSF005572">
    <property type="entry name" value="NifS"/>
    <property type="match status" value="1"/>
</dbReference>
<dbReference type="SUPFAM" id="SSF53383">
    <property type="entry name" value="PLP-dependent transferases"/>
    <property type="match status" value="1"/>
</dbReference>
<dbReference type="PROSITE" id="PS00595">
    <property type="entry name" value="AA_TRANSFER_CLASS_5"/>
    <property type="match status" value="1"/>
</dbReference>
<feature type="chain" id="PRO_1000119650" description="Cysteine desulfurase IscS">
    <location>
        <begin position="1"/>
        <end position="404"/>
    </location>
</feature>
<feature type="active site" description="Cysteine persulfide intermediate" evidence="1">
    <location>
        <position position="328"/>
    </location>
</feature>
<feature type="binding site" evidence="1">
    <location>
        <begin position="75"/>
        <end position="76"/>
    </location>
    <ligand>
        <name>pyridoxal 5'-phosphate</name>
        <dbReference type="ChEBI" id="CHEBI:597326"/>
    </ligand>
</feature>
<feature type="binding site" evidence="1">
    <location>
        <position position="155"/>
    </location>
    <ligand>
        <name>pyridoxal 5'-phosphate</name>
        <dbReference type="ChEBI" id="CHEBI:597326"/>
    </ligand>
</feature>
<feature type="binding site" evidence="1">
    <location>
        <position position="183"/>
    </location>
    <ligand>
        <name>pyridoxal 5'-phosphate</name>
        <dbReference type="ChEBI" id="CHEBI:597326"/>
    </ligand>
</feature>
<feature type="binding site" evidence="1">
    <location>
        <begin position="203"/>
        <end position="205"/>
    </location>
    <ligand>
        <name>pyridoxal 5'-phosphate</name>
        <dbReference type="ChEBI" id="CHEBI:597326"/>
    </ligand>
</feature>
<feature type="binding site" evidence="1">
    <location>
        <position position="243"/>
    </location>
    <ligand>
        <name>pyridoxal 5'-phosphate</name>
        <dbReference type="ChEBI" id="CHEBI:597326"/>
    </ligand>
</feature>
<feature type="binding site" description="via persulfide group" evidence="1">
    <location>
        <position position="328"/>
    </location>
    <ligand>
        <name>[2Fe-2S] cluster</name>
        <dbReference type="ChEBI" id="CHEBI:190135"/>
        <note>ligand shared with IscU</note>
    </ligand>
</feature>
<feature type="modified residue" description="N6-(pyridoxal phosphate)lysine" evidence="1">
    <location>
        <position position="206"/>
    </location>
</feature>
<keyword id="KW-0001">2Fe-2S</keyword>
<keyword id="KW-0963">Cytoplasm</keyword>
<keyword id="KW-0408">Iron</keyword>
<keyword id="KW-0411">Iron-sulfur</keyword>
<keyword id="KW-0479">Metal-binding</keyword>
<keyword id="KW-0663">Pyridoxal phosphate</keyword>
<keyword id="KW-1185">Reference proteome</keyword>
<keyword id="KW-0808">Transferase</keyword>
<accession>B2TXV5</accession>
<gene>
    <name evidence="1" type="primary">iscS</name>
    <name type="ordered locus">SbBS512_E2905</name>
</gene>
<organism>
    <name type="scientific">Shigella boydii serotype 18 (strain CDC 3083-94 / BS512)</name>
    <dbReference type="NCBI Taxonomy" id="344609"/>
    <lineage>
        <taxon>Bacteria</taxon>
        <taxon>Pseudomonadati</taxon>
        <taxon>Pseudomonadota</taxon>
        <taxon>Gammaproteobacteria</taxon>
        <taxon>Enterobacterales</taxon>
        <taxon>Enterobacteriaceae</taxon>
        <taxon>Shigella</taxon>
    </lineage>
</organism>
<protein>
    <recommendedName>
        <fullName evidence="1">Cysteine desulfurase IscS</fullName>
        <ecNumber evidence="1">2.8.1.7</ecNumber>
    </recommendedName>
</protein>
<name>ISCS_SHIB3</name>
<comment type="function">
    <text evidence="1">Master enzyme that delivers sulfur to a number of partners involved in Fe-S cluster assembly, tRNA modification or cofactor biosynthesis. Catalyzes the removal of elemental sulfur and selenium atoms from cysteine and selenocysteine to produce alanine. Functions as a sulfur delivery protein for Fe-S cluster synthesis onto IscU, an Fe-S scaffold assembly protein, as well as other S acceptor proteins. Also functions as a selenium delivery protein in the pathway for the biosynthesis of selenophosphate.</text>
</comment>
<comment type="catalytic activity">
    <reaction evidence="1">
        <text>(sulfur carrier)-H + L-cysteine = (sulfur carrier)-SH + L-alanine</text>
        <dbReference type="Rhea" id="RHEA:43892"/>
        <dbReference type="Rhea" id="RHEA-COMP:14737"/>
        <dbReference type="Rhea" id="RHEA-COMP:14739"/>
        <dbReference type="ChEBI" id="CHEBI:29917"/>
        <dbReference type="ChEBI" id="CHEBI:35235"/>
        <dbReference type="ChEBI" id="CHEBI:57972"/>
        <dbReference type="ChEBI" id="CHEBI:64428"/>
        <dbReference type="EC" id="2.8.1.7"/>
    </reaction>
</comment>
<comment type="cofactor">
    <cofactor evidence="1">
        <name>pyridoxal 5'-phosphate</name>
        <dbReference type="ChEBI" id="CHEBI:597326"/>
    </cofactor>
</comment>
<comment type="pathway">
    <text evidence="1">Cofactor biosynthesis; iron-sulfur cluster biosynthesis.</text>
</comment>
<comment type="subunit">
    <text evidence="1">Homodimer. Forms a heterotetramer with IscU, interacts with other sulfur acceptors.</text>
</comment>
<comment type="subcellular location">
    <subcellularLocation>
        <location evidence="1">Cytoplasm</location>
    </subcellularLocation>
</comment>
<comment type="similarity">
    <text evidence="1">Belongs to the class-V pyridoxal-phosphate-dependent aminotransferase family. NifS/IscS subfamily.</text>
</comment>